<dbReference type="EMBL" id="FM180568">
    <property type="protein sequence ID" value="CAS11137.1"/>
    <property type="molecule type" value="Genomic_DNA"/>
</dbReference>
<dbReference type="RefSeq" id="WP_000124700.1">
    <property type="nucleotide sequence ID" value="NC_011601.1"/>
</dbReference>
<dbReference type="SMR" id="B7UK50"/>
<dbReference type="GeneID" id="93778658"/>
<dbReference type="KEGG" id="ecg:E2348C_3589"/>
<dbReference type="HOGENOM" id="CLU_002794_4_1_6"/>
<dbReference type="Proteomes" id="UP000008205">
    <property type="component" value="Chromosome"/>
</dbReference>
<dbReference type="GO" id="GO:0005737">
    <property type="term" value="C:cytoplasm"/>
    <property type="evidence" value="ECO:0007669"/>
    <property type="project" value="UniProtKB-SubCell"/>
</dbReference>
<dbReference type="GO" id="GO:0005525">
    <property type="term" value="F:GTP binding"/>
    <property type="evidence" value="ECO:0007669"/>
    <property type="project" value="UniProtKB-UniRule"/>
</dbReference>
<dbReference type="GO" id="GO:0003924">
    <property type="term" value="F:GTPase activity"/>
    <property type="evidence" value="ECO:0007669"/>
    <property type="project" value="InterPro"/>
</dbReference>
<dbReference type="GO" id="GO:0097216">
    <property type="term" value="F:guanosine tetraphosphate binding"/>
    <property type="evidence" value="ECO:0007669"/>
    <property type="project" value="UniProtKB-ARBA"/>
</dbReference>
<dbReference type="GO" id="GO:0003746">
    <property type="term" value="F:translation elongation factor activity"/>
    <property type="evidence" value="ECO:0007669"/>
    <property type="project" value="UniProtKB-UniRule"/>
</dbReference>
<dbReference type="GO" id="GO:0032790">
    <property type="term" value="P:ribosome disassembly"/>
    <property type="evidence" value="ECO:0007669"/>
    <property type="project" value="TreeGrafter"/>
</dbReference>
<dbReference type="CDD" id="cd01886">
    <property type="entry name" value="EF-G"/>
    <property type="match status" value="1"/>
</dbReference>
<dbReference type="CDD" id="cd16262">
    <property type="entry name" value="EFG_III"/>
    <property type="match status" value="1"/>
</dbReference>
<dbReference type="CDD" id="cd01434">
    <property type="entry name" value="EFG_mtEFG1_IV"/>
    <property type="match status" value="1"/>
</dbReference>
<dbReference type="CDD" id="cd03713">
    <property type="entry name" value="EFG_mtEFG_C"/>
    <property type="match status" value="1"/>
</dbReference>
<dbReference type="CDD" id="cd04088">
    <property type="entry name" value="EFG_mtEFG_II"/>
    <property type="match status" value="1"/>
</dbReference>
<dbReference type="FunFam" id="2.40.30.10:FF:000006">
    <property type="entry name" value="Elongation factor G"/>
    <property type="match status" value="1"/>
</dbReference>
<dbReference type="FunFam" id="3.30.230.10:FF:000003">
    <property type="entry name" value="Elongation factor G"/>
    <property type="match status" value="1"/>
</dbReference>
<dbReference type="FunFam" id="3.30.70.240:FF:000001">
    <property type="entry name" value="Elongation factor G"/>
    <property type="match status" value="1"/>
</dbReference>
<dbReference type="FunFam" id="3.30.70.870:FF:000001">
    <property type="entry name" value="Elongation factor G"/>
    <property type="match status" value="1"/>
</dbReference>
<dbReference type="FunFam" id="3.40.50.300:FF:000029">
    <property type="entry name" value="Elongation factor G"/>
    <property type="match status" value="1"/>
</dbReference>
<dbReference type="Gene3D" id="3.30.230.10">
    <property type="match status" value="1"/>
</dbReference>
<dbReference type="Gene3D" id="3.30.70.240">
    <property type="match status" value="1"/>
</dbReference>
<dbReference type="Gene3D" id="3.30.70.870">
    <property type="entry name" value="Elongation Factor G (Translational Gtpase), domain 3"/>
    <property type="match status" value="1"/>
</dbReference>
<dbReference type="Gene3D" id="3.40.50.300">
    <property type="entry name" value="P-loop containing nucleotide triphosphate hydrolases"/>
    <property type="match status" value="1"/>
</dbReference>
<dbReference type="Gene3D" id="2.40.30.10">
    <property type="entry name" value="Translation factors"/>
    <property type="match status" value="1"/>
</dbReference>
<dbReference type="HAMAP" id="MF_00054_B">
    <property type="entry name" value="EF_G_EF_2_B"/>
    <property type="match status" value="1"/>
</dbReference>
<dbReference type="InterPro" id="IPR041095">
    <property type="entry name" value="EFG_II"/>
</dbReference>
<dbReference type="InterPro" id="IPR009022">
    <property type="entry name" value="EFG_III"/>
</dbReference>
<dbReference type="InterPro" id="IPR035647">
    <property type="entry name" value="EFG_III/V"/>
</dbReference>
<dbReference type="InterPro" id="IPR047872">
    <property type="entry name" value="EFG_IV"/>
</dbReference>
<dbReference type="InterPro" id="IPR035649">
    <property type="entry name" value="EFG_V"/>
</dbReference>
<dbReference type="InterPro" id="IPR000640">
    <property type="entry name" value="EFG_V-like"/>
</dbReference>
<dbReference type="InterPro" id="IPR004161">
    <property type="entry name" value="EFTu-like_2"/>
</dbReference>
<dbReference type="InterPro" id="IPR031157">
    <property type="entry name" value="G_TR_CS"/>
</dbReference>
<dbReference type="InterPro" id="IPR027417">
    <property type="entry name" value="P-loop_NTPase"/>
</dbReference>
<dbReference type="InterPro" id="IPR020568">
    <property type="entry name" value="Ribosomal_Su5_D2-typ_SF"/>
</dbReference>
<dbReference type="InterPro" id="IPR014721">
    <property type="entry name" value="Ribsml_uS5_D2-typ_fold_subgr"/>
</dbReference>
<dbReference type="InterPro" id="IPR005225">
    <property type="entry name" value="Small_GTP-bd"/>
</dbReference>
<dbReference type="InterPro" id="IPR000795">
    <property type="entry name" value="T_Tr_GTP-bd_dom"/>
</dbReference>
<dbReference type="InterPro" id="IPR009000">
    <property type="entry name" value="Transl_B-barrel_sf"/>
</dbReference>
<dbReference type="InterPro" id="IPR004540">
    <property type="entry name" value="Transl_elong_EFG/EF2"/>
</dbReference>
<dbReference type="InterPro" id="IPR005517">
    <property type="entry name" value="Transl_elong_EFG/EF2_IV"/>
</dbReference>
<dbReference type="NCBIfam" id="TIGR00484">
    <property type="entry name" value="EF-G"/>
    <property type="match status" value="1"/>
</dbReference>
<dbReference type="NCBIfam" id="NF009381">
    <property type="entry name" value="PRK12740.1-5"/>
    <property type="match status" value="1"/>
</dbReference>
<dbReference type="NCBIfam" id="TIGR00231">
    <property type="entry name" value="small_GTP"/>
    <property type="match status" value="1"/>
</dbReference>
<dbReference type="PANTHER" id="PTHR43261:SF1">
    <property type="entry name" value="RIBOSOME-RELEASING FACTOR 2, MITOCHONDRIAL"/>
    <property type="match status" value="1"/>
</dbReference>
<dbReference type="PANTHER" id="PTHR43261">
    <property type="entry name" value="TRANSLATION ELONGATION FACTOR G-RELATED"/>
    <property type="match status" value="1"/>
</dbReference>
<dbReference type="Pfam" id="PF00679">
    <property type="entry name" value="EFG_C"/>
    <property type="match status" value="1"/>
</dbReference>
<dbReference type="Pfam" id="PF14492">
    <property type="entry name" value="EFG_III"/>
    <property type="match status" value="1"/>
</dbReference>
<dbReference type="Pfam" id="PF03764">
    <property type="entry name" value="EFG_IV"/>
    <property type="match status" value="1"/>
</dbReference>
<dbReference type="Pfam" id="PF00009">
    <property type="entry name" value="GTP_EFTU"/>
    <property type="match status" value="1"/>
</dbReference>
<dbReference type="Pfam" id="PF03144">
    <property type="entry name" value="GTP_EFTU_D2"/>
    <property type="match status" value="1"/>
</dbReference>
<dbReference type="PRINTS" id="PR00315">
    <property type="entry name" value="ELONGATNFCT"/>
</dbReference>
<dbReference type="SMART" id="SM00838">
    <property type="entry name" value="EFG_C"/>
    <property type="match status" value="1"/>
</dbReference>
<dbReference type="SMART" id="SM00889">
    <property type="entry name" value="EFG_IV"/>
    <property type="match status" value="1"/>
</dbReference>
<dbReference type="SUPFAM" id="SSF54980">
    <property type="entry name" value="EF-G C-terminal domain-like"/>
    <property type="match status" value="2"/>
</dbReference>
<dbReference type="SUPFAM" id="SSF52540">
    <property type="entry name" value="P-loop containing nucleoside triphosphate hydrolases"/>
    <property type="match status" value="1"/>
</dbReference>
<dbReference type="SUPFAM" id="SSF54211">
    <property type="entry name" value="Ribosomal protein S5 domain 2-like"/>
    <property type="match status" value="1"/>
</dbReference>
<dbReference type="SUPFAM" id="SSF50447">
    <property type="entry name" value="Translation proteins"/>
    <property type="match status" value="1"/>
</dbReference>
<dbReference type="PROSITE" id="PS00301">
    <property type="entry name" value="G_TR_1"/>
    <property type="match status" value="1"/>
</dbReference>
<dbReference type="PROSITE" id="PS51722">
    <property type="entry name" value="G_TR_2"/>
    <property type="match status" value="1"/>
</dbReference>
<organism>
    <name type="scientific">Escherichia coli O127:H6 (strain E2348/69 / EPEC)</name>
    <dbReference type="NCBI Taxonomy" id="574521"/>
    <lineage>
        <taxon>Bacteria</taxon>
        <taxon>Pseudomonadati</taxon>
        <taxon>Pseudomonadota</taxon>
        <taxon>Gammaproteobacteria</taxon>
        <taxon>Enterobacterales</taxon>
        <taxon>Enterobacteriaceae</taxon>
        <taxon>Escherichia</taxon>
    </lineage>
</organism>
<proteinExistence type="inferred from homology"/>
<accession>B7UK50</accession>
<keyword id="KW-0007">Acetylation</keyword>
<keyword id="KW-0963">Cytoplasm</keyword>
<keyword id="KW-0251">Elongation factor</keyword>
<keyword id="KW-0342">GTP-binding</keyword>
<keyword id="KW-0547">Nucleotide-binding</keyword>
<keyword id="KW-0648">Protein biosynthesis</keyword>
<keyword id="KW-1185">Reference proteome</keyword>
<name>EFG_ECO27</name>
<comment type="function">
    <text evidence="2">Catalyzes the GTP-dependent ribosomal translocation step during translation elongation. During this step, the ribosome changes from the pre-translocational (PRE) to the post-translocational (POST) state as the newly formed A-site-bound peptidyl-tRNA and P-site-bound deacylated tRNA move to the P and E sites, respectively. Catalyzes the coordinated movement of the two tRNA molecules, the mRNA and conformational changes in the ribosome.</text>
</comment>
<comment type="subcellular location">
    <subcellularLocation>
        <location evidence="2">Cytoplasm</location>
    </subcellularLocation>
</comment>
<comment type="similarity">
    <text evidence="2">Belongs to the TRAFAC class translation factor GTPase superfamily. Classic translation factor GTPase family. EF-G/EF-2 subfamily.</text>
</comment>
<reference key="1">
    <citation type="journal article" date="2009" name="J. Bacteriol.">
        <title>Complete genome sequence and comparative genome analysis of enteropathogenic Escherichia coli O127:H6 strain E2348/69.</title>
        <authorList>
            <person name="Iguchi A."/>
            <person name="Thomson N.R."/>
            <person name="Ogura Y."/>
            <person name="Saunders D."/>
            <person name="Ooka T."/>
            <person name="Henderson I.R."/>
            <person name="Harris D."/>
            <person name="Asadulghani M."/>
            <person name="Kurokawa K."/>
            <person name="Dean P."/>
            <person name="Kenny B."/>
            <person name="Quail M.A."/>
            <person name="Thurston S."/>
            <person name="Dougan G."/>
            <person name="Hayashi T."/>
            <person name="Parkhill J."/>
            <person name="Frankel G."/>
        </authorList>
    </citation>
    <scope>NUCLEOTIDE SEQUENCE [LARGE SCALE GENOMIC DNA]</scope>
    <source>
        <strain>E2348/69 / EPEC</strain>
    </source>
</reference>
<evidence type="ECO:0000250" key="1"/>
<evidence type="ECO:0000255" key="2">
    <source>
        <dbReference type="HAMAP-Rule" id="MF_00054"/>
    </source>
</evidence>
<protein>
    <recommendedName>
        <fullName evidence="2">Elongation factor G</fullName>
        <shortName evidence="2">EF-G</shortName>
    </recommendedName>
</protein>
<sequence>MARTTPIARYRNIGISAHIDAGKTTTTERILFYTGVNHKIGEVHDGAATMDWMEQEQERGITITSAATTAFWSGMAKQYEPHRINIIDTPGHVDFTIEVERSMRVLDGAVMVYCAVGGVQPQSETVWRQANKYKVPRIAFVNKMDRMGANFLKVVNQIKTRLGANPVPLQLAIGAEEHFTGVVDLVKMKAINWNDADQGVTFEYEDIPADMVELANEWHQNLIESAAEASEELMEKYLGGEELTEAEIKGALRQRVLNNEIILVTCGSAFKNKGVQAMLDAVIDYLPSPVDVPAINGILDDGKDTPAERHASDDEPFSALAFKIATDPFVGNLTFFRVYSGVVNSGDTVLNSVKAARERFGRIVQMHANKREEIKEVRAGDIAAAIGLKDVTTGDTLCDPDAPIILERMEFPEPVISIAVEPKTKADQEKMGLALGRLAKEDPSFRVWTDEESNQTIIAGMGELHLDIIVDRMKREFNVEANVGKPQVAYRETIRQKVTDVEGKHAKQSGGRGQYGHVVIDMYPLEPGSNPKGYEFINDIKGGVIPGEYIPAVDKGIQEQLKAGPLAGYPVVDMGIRLHFGSYHDVDSSELAFKLAASIAFKEGFKKAKPVLLEPIMKVEVETPEENTGDVIGDLSRRRGMLKGQESEVTGVKIHAEVPLSEMFGYATQLRSLTKGRASYTMEFLKYDEAPSNVAQAVIEARGK</sequence>
<gene>
    <name evidence="2" type="primary">fusA</name>
    <name type="ordered locus">E2348C_3589</name>
</gene>
<feature type="chain" id="PRO_1000201459" description="Elongation factor G">
    <location>
        <begin position="1"/>
        <end position="704"/>
    </location>
</feature>
<feature type="domain" description="tr-type G">
    <location>
        <begin position="8"/>
        <end position="290"/>
    </location>
</feature>
<feature type="binding site" evidence="2">
    <location>
        <begin position="17"/>
        <end position="24"/>
    </location>
    <ligand>
        <name>GTP</name>
        <dbReference type="ChEBI" id="CHEBI:37565"/>
    </ligand>
</feature>
<feature type="binding site" evidence="2">
    <location>
        <begin position="88"/>
        <end position="92"/>
    </location>
    <ligand>
        <name>GTP</name>
        <dbReference type="ChEBI" id="CHEBI:37565"/>
    </ligand>
</feature>
<feature type="binding site" evidence="2">
    <location>
        <begin position="142"/>
        <end position="145"/>
    </location>
    <ligand>
        <name>GTP</name>
        <dbReference type="ChEBI" id="CHEBI:37565"/>
    </ligand>
</feature>
<feature type="modified residue" description="N6-acetyllysine" evidence="1">
    <location>
        <position position="504"/>
    </location>
</feature>
<feature type="modified residue" description="N6-acetyllysine" evidence="1">
    <location>
        <position position="643"/>
    </location>
</feature>